<reference key="1">
    <citation type="journal article" date="2001" name="Nature">
        <title>Genome sequence of enterohaemorrhagic Escherichia coli O157:H7.</title>
        <authorList>
            <person name="Perna N.T."/>
            <person name="Plunkett G. III"/>
            <person name="Burland V."/>
            <person name="Mau B."/>
            <person name="Glasner J.D."/>
            <person name="Rose D.J."/>
            <person name="Mayhew G.F."/>
            <person name="Evans P.S."/>
            <person name="Gregor J."/>
            <person name="Kirkpatrick H.A."/>
            <person name="Posfai G."/>
            <person name="Hackett J."/>
            <person name="Klink S."/>
            <person name="Boutin A."/>
            <person name="Shao Y."/>
            <person name="Miller L."/>
            <person name="Grotbeck E.J."/>
            <person name="Davis N.W."/>
            <person name="Lim A."/>
            <person name="Dimalanta E.T."/>
            <person name="Potamousis K."/>
            <person name="Apodaca J."/>
            <person name="Anantharaman T.S."/>
            <person name="Lin J."/>
            <person name="Yen G."/>
            <person name="Schwartz D.C."/>
            <person name="Welch R.A."/>
            <person name="Blattner F.R."/>
        </authorList>
    </citation>
    <scope>NUCLEOTIDE SEQUENCE [LARGE SCALE GENOMIC DNA]</scope>
    <source>
        <strain>O157:H7 / EDL933 / ATCC 700927 / EHEC</strain>
    </source>
</reference>
<reference key="2">
    <citation type="journal article" date="2001" name="DNA Res.">
        <title>Complete genome sequence of enterohemorrhagic Escherichia coli O157:H7 and genomic comparison with a laboratory strain K-12.</title>
        <authorList>
            <person name="Hayashi T."/>
            <person name="Makino K."/>
            <person name="Ohnishi M."/>
            <person name="Kurokawa K."/>
            <person name="Ishii K."/>
            <person name="Yokoyama K."/>
            <person name="Han C.-G."/>
            <person name="Ohtsubo E."/>
            <person name="Nakayama K."/>
            <person name="Murata T."/>
            <person name="Tanaka M."/>
            <person name="Tobe T."/>
            <person name="Iida T."/>
            <person name="Takami H."/>
            <person name="Honda T."/>
            <person name="Sasakawa C."/>
            <person name="Ogasawara N."/>
            <person name="Yasunaga T."/>
            <person name="Kuhara S."/>
            <person name="Shiba T."/>
            <person name="Hattori M."/>
            <person name="Shinagawa H."/>
        </authorList>
    </citation>
    <scope>NUCLEOTIDE SEQUENCE [LARGE SCALE GENOMIC DNA]</scope>
    <source>
        <strain>O157:H7 / Sakai / RIMD 0509952 / EHEC</strain>
    </source>
</reference>
<proteinExistence type="inferred from homology"/>
<feature type="chain" id="PRO_0000204159" description="Arginine exporter protein ArgO">
    <location>
        <begin position="1"/>
        <end position="211"/>
    </location>
</feature>
<feature type="transmembrane region" description="Helical" evidence="2">
    <location>
        <begin position="1"/>
        <end position="21"/>
    </location>
</feature>
<feature type="transmembrane region" description="Helical" evidence="2">
    <location>
        <begin position="37"/>
        <end position="57"/>
    </location>
</feature>
<feature type="transmembrane region" description="Helical" evidence="2">
    <location>
        <begin position="68"/>
        <end position="88"/>
    </location>
</feature>
<feature type="transmembrane region" description="Helical" evidence="2">
    <location>
        <begin position="111"/>
        <end position="131"/>
    </location>
</feature>
<feature type="transmembrane region" description="Helical" evidence="2">
    <location>
        <begin position="147"/>
        <end position="167"/>
    </location>
</feature>
<feature type="transmembrane region" description="Helical" evidence="2">
    <location>
        <begin position="182"/>
        <end position="202"/>
    </location>
</feature>
<dbReference type="EMBL" id="AE005174">
    <property type="protein sequence ID" value="AAG58049.1"/>
    <property type="molecule type" value="Genomic_DNA"/>
</dbReference>
<dbReference type="EMBL" id="BA000007">
    <property type="protein sequence ID" value="BAB37217.1"/>
    <property type="molecule type" value="Genomic_DNA"/>
</dbReference>
<dbReference type="PIR" id="B91103">
    <property type="entry name" value="B91103"/>
</dbReference>
<dbReference type="PIR" id="E85948">
    <property type="entry name" value="E85948"/>
</dbReference>
<dbReference type="RefSeq" id="NP_311821.1">
    <property type="nucleotide sequence ID" value="NC_002695.1"/>
</dbReference>
<dbReference type="RefSeq" id="WP_000493360.1">
    <property type="nucleotide sequence ID" value="NZ_VOAI01000003.1"/>
</dbReference>
<dbReference type="STRING" id="155864.Z4260"/>
<dbReference type="GeneID" id="916374"/>
<dbReference type="KEGG" id="ece:Z4260"/>
<dbReference type="KEGG" id="ecs:ECs_3794"/>
<dbReference type="PATRIC" id="fig|386585.9.peg.3960"/>
<dbReference type="eggNOG" id="COG1279">
    <property type="taxonomic scope" value="Bacteria"/>
</dbReference>
<dbReference type="HOGENOM" id="CLU_087840_0_1_6"/>
<dbReference type="OMA" id="HVFAVCL"/>
<dbReference type="Proteomes" id="UP000000558">
    <property type="component" value="Chromosome"/>
</dbReference>
<dbReference type="Proteomes" id="UP000002519">
    <property type="component" value="Chromosome"/>
</dbReference>
<dbReference type="GO" id="GO:0005886">
    <property type="term" value="C:plasma membrane"/>
    <property type="evidence" value="ECO:0007669"/>
    <property type="project" value="UniProtKB-SubCell"/>
</dbReference>
<dbReference type="GO" id="GO:0061459">
    <property type="term" value="F:L-arginine transmembrane transporter activity"/>
    <property type="evidence" value="ECO:0007669"/>
    <property type="project" value="UniProtKB-UniRule"/>
</dbReference>
<dbReference type="HAMAP" id="MF_01901">
    <property type="entry name" value="ArgO"/>
    <property type="match status" value="1"/>
</dbReference>
<dbReference type="InterPro" id="IPR023445">
    <property type="entry name" value="Arg_export_ArgO_enterobac"/>
</dbReference>
<dbReference type="InterPro" id="IPR001123">
    <property type="entry name" value="LeuE-type"/>
</dbReference>
<dbReference type="InterPro" id="IPR004777">
    <property type="entry name" value="Lys/arg_exporter"/>
</dbReference>
<dbReference type="NCBIfam" id="TIGR00948">
    <property type="entry name" value="2a75"/>
    <property type="match status" value="1"/>
</dbReference>
<dbReference type="NCBIfam" id="NF006801">
    <property type="entry name" value="PRK09304.1"/>
    <property type="match status" value="1"/>
</dbReference>
<dbReference type="PANTHER" id="PTHR30086">
    <property type="entry name" value="ARGININE EXPORTER PROTEIN ARGO"/>
    <property type="match status" value="1"/>
</dbReference>
<dbReference type="PANTHER" id="PTHR30086:SF20">
    <property type="entry name" value="ARGININE EXPORTER PROTEIN ARGO-RELATED"/>
    <property type="match status" value="1"/>
</dbReference>
<dbReference type="Pfam" id="PF01810">
    <property type="entry name" value="LysE"/>
    <property type="match status" value="1"/>
</dbReference>
<evidence type="ECO:0000250" key="1"/>
<evidence type="ECO:0000255" key="2">
    <source>
        <dbReference type="HAMAP-Rule" id="MF_01901"/>
    </source>
</evidence>
<evidence type="ECO:0000305" key="3"/>
<accession>Q8XD10</accession>
<accession>Q7AAY8</accession>
<sequence>MFSYYFQGLALGAAMILPLGPQNAFVMNQGIRRQYHIMIALLCAISDLVLICAGIFGGSALLMQSPWLLALVTWGGVVFLLWYGFGAFKTAMSSNIELASAEVLKQGRWKIIATMLAVTWLNPHVYLDTFVVLGSLGGQLDVEPKRWFALGTISASFLWFFGLAILAAWLAPRLRTAKSQRIINLVVGCVMWFIALQLARDGIAHAQALFS</sequence>
<protein>
    <recommendedName>
        <fullName evidence="2">Arginine exporter protein ArgO</fullName>
    </recommendedName>
</protein>
<keyword id="KW-0029">Amino-acid transport</keyword>
<keyword id="KW-0997">Cell inner membrane</keyword>
<keyword id="KW-1003">Cell membrane</keyword>
<keyword id="KW-0472">Membrane</keyword>
<keyword id="KW-1185">Reference proteome</keyword>
<keyword id="KW-0812">Transmembrane</keyword>
<keyword id="KW-1133">Transmembrane helix</keyword>
<keyword id="KW-0813">Transport</keyword>
<name>ARGO_ECO57</name>
<comment type="function">
    <text evidence="2">Involved in the export of arginine. Important to control the intracellular level of arginine and the correct balance between arginine and lysine.</text>
</comment>
<comment type="catalytic activity">
    <reaction evidence="2">
        <text>L-arginine(in) = L-arginine(out)</text>
        <dbReference type="Rhea" id="RHEA:32143"/>
        <dbReference type="ChEBI" id="CHEBI:32682"/>
    </reaction>
    <physiologicalReaction direction="left-to-right" evidence="2">
        <dbReference type="Rhea" id="RHEA:32144"/>
    </physiologicalReaction>
</comment>
<comment type="subcellular location">
    <subcellularLocation>
        <location evidence="2">Cell inner membrane</location>
        <topology evidence="2">Multi-pass membrane protein</topology>
    </subcellularLocation>
</comment>
<comment type="induction">
    <text evidence="1">Transcriptionally regulated by ArgP. Lysine has a negative effect on the expression of argO (By similarity).</text>
</comment>
<comment type="similarity">
    <text evidence="2 3">Belongs to the LysE/ArgO transporter (TC 2.A.75) family.</text>
</comment>
<organism>
    <name type="scientific">Escherichia coli O157:H7</name>
    <dbReference type="NCBI Taxonomy" id="83334"/>
    <lineage>
        <taxon>Bacteria</taxon>
        <taxon>Pseudomonadati</taxon>
        <taxon>Pseudomonadota</taxon>
        <taxon>Gammaproteobacteria</taxon>
        <taxon>Enterobacterales</taxon>
        <taxon>Enterobacteriaceae</taxon>
        <taxon>Escherichia</taxon>
    </lineage>
</organism>
<gene>
    <name evidence="2" type="primary">argO</name>
    <name type="ordered locus">Z4260</name>
    <name type="ordered locus">ECs3794</name>
</gene>